<name>YCF33_CYAPA</name>
<organism>
    <name type="scientific">Cyanophora paradoxa</name>
    <dbReference type="NCBI Taxonomy" id="2762"/>
    <lineage>
        <taxon>Eukaryota</taxon>
        <taxon>Glaucocystophyceae</taxon>
        <taxon>Cyanophoraceae</taxon>
        <taxon>Cyanophora</taxon>
    </lineage>
</organism>
<geneLocation type="cyanelle"/>
<proteinExistence type="inferred from homology"/>
<reference key="1">
    <citation type="journal article" date="1995" name="Plant Mol. Biol. Rep.">
        <title>Nucleotide sequence of the cyanelle DNA from Cyanophora paradoxa.</title>
        <authorList>
            <person name="Stirewalt V.L."/>
            <person name="Michalowski C.B."/>
            <person name="Loeffelhardt W."/>
            <person name="Bohnert H.J."/>
            <person name="Bryant D.A."/>
        </authorList>
    </citation>
    <scope>NUCLEOTIDE SEQUENCE [LARGE SCALE GENOMIC DNA]</scope>
    <source>
        <strain>UTEX LB 555 / Pringsheim</strain>
    </source>
</reference>
<reference key="2">
    <citation type="book" date="1997" name="Eukaryotism and symbiosis">
        <title>The complete sequence of the cyanelle genome of Cyanophora paradoxa: the genetic complexity of a primitive plastid.</title>
        <editorList>
            <person name="Schenk H.E.A."/>
            <person name="Herrmann R."/>
            <person name="Jeon K.W."/>
            <person name="Mueller N.E."/>
            <person name="Schwemmler W."/>
        </editorList>
        <authorList>
            <person name="Loeffelhardt W."/>
            <person name="Stirewalt V.L."/>
            <person name="Michalowski C.B."/>
            <person name="Annarella M."/>
            <person name="Farley J.Y."/>
            <person name="Schluchter W.M."/>
            <person name="Chung S."/>
            <person name="Newmann-Spallart C."/>
            <person name="Steiner J.M."/>
            <person name="Jakowitsch J."/>
            <person name="Bohnert H.J."/>
            <person name="Bryant D.A."/>
        </authorList>
    </citation>
    <scope>NUCLEOTIDE SEQUENCE [LARGE SCALE GENOMIC DNA]</scope>
    <source>
        <strain>UTEX LB 555 / Pringsheim</strain>
    </source>
</reference>
<feature type="chain" id="PRO_0000217340" description="Uncharacterized protein ycf33">
    <location>
        <begin position="1"/>
        <end position="65"/>
    </location>
</feature>
<protein>
    <recommendedName>
        <fullName>Uncharacterized protein ycf33</fullName>
    </recommendedName>
</protein>
<comment type="subcellular location">
    <subcellularLocation>
        <location>Plastid</location>
        <location>Cyanelle</location>
    </subcellularLocation>
</comment>
<comment type="similarity">
    <text evidence="1">Belongs to the ycf33 family.</text>
</comment>
<evidence type="ECO:0000305" key="1"/>
<dbReference type="EMBL" id="U30821">
    <property type="protein sequence ID" value="AAA81285.1"/>
    <property type="molecule type" value="Genomic_DNA"/>
</dbReference>
<dbReference type="PIR" id="T06942">
    <property type="entry name" value="T06942"/>
</dbReference>
<dbReference type="RefSeq" id="NP_043254.1">
    <property type="nucleotide sequence ID" value="NC_001675.1"/>
</dbReference>
<dbReference type="SMR" id="P48273"/>
<dbReference type="GeneID" id="801658"/>
<dbReference type="GO" id="GO:0009842">
    <property type="term" value="C:cyanelle"/>
    <property type="evidence" value="ECO:0007669"/>
    <property type="project" value="UniProtKB-SubCell"/>
</dbReference>
<dbReference type="InterPro" id="IPR008470">
    <property type="entry name" value="Uncharacterised_Ycf33"/>
</dbReference>
<dbReference type="Pfam" id="PF05421">
    <property type="entry name" value="DUF751"/>
    <property type="match status" value="1"/>
</dbReference>
<accession>P48273</accession>
<keyword id="KW-0194">Cyanelle</keyword>
<keyword id="KW-0934">Plastid</keyword>
<gene>
    <name type="primary">ycf33</name>
</gene>
<sequence length="65" mass="7635">MSNFFTNVLRYPLFLISFSLGIFLTFFRWIEPITKKPLNLIVLIISFGTVLMFLNLTFKAMLDLN</sequence>